<evidence type="ECO:0000250" key="1">
    <source>
        <dbReference type="UniProtKB" id="P04798"/>
    </source>
</evidence>
<evidence type="ECO:0000255" key="2"/>
<evidence type="ECO:0000255" key="3">
    <source>
        <dbReference type="PROSITE-ProRule" id="PRU00498"/>
    </source>
</evidence>
<evidence type="ECO:0000256" key="4">
    <source>
        <dbReference type="SAM" id="MobiDB-lite"/>
    </source>
</evidence>
<evidence type="ECO:0000269" key="5">
    <source>
    </source>
</evidence>
<evidence type="ECO:0000269" key="6">
    <source>
    </source>
</evidence>
<evidence type="ECO:0000269" key="7">
    <source>
    </source>
</evidence>
<evidence type="ECO:0000269" key="8">
    <source>
    </source>
</evidence>
<evidence type="ECO:0000303" key="9">
    <source>
    </source>
</evidence>
<evidence type="ECO:0000303" key="10">
    <source>
    </source>
</evidence>
<feature type="chain" id="PRO_0000441947" description="Cytochrome P450 monooxygenase helB1">
    <location>
        <begin position="1"/>
        <end position="580"/>
    </location>
</feature>
<feature type="transmembrane region" description="Helical" evidence="2">
    <location>
        <begin position="61"/>
        <end position="81"/>
    </location>
</feature>
<feature type="region of interest" description="Disordered" evidence="4">
    <location>
        <begin position="1"/>
        <end position="32"/>
    </location>
</feature>
<feature type="binding site" description="axial binding residue" evidence="1">
    <location>
        <position position="497"/>
    </location>
    <ligand>
        <name>heme</name>
        <dbReference type="ChEBI" id="CHEBI:30413"/>
    </ligand>
    <ligandPart>
        <name>Fe</name>
        <dbReference type="ChEBI" id="CHEBI:18248"/>
    </ligandPart>
</feature>
<feature type="glycosylation site" description="N-linked (GlcNAc...) asparagine" evidence="3">
    <location>
        <position position="28"/>
    </location>
</feature>
<sequence>MRTYAIRPVSNRLPGPIEPKKHRRDRDNSTTGSLYNALIHPVQGEKTITSTMIRVAEFQPFLNTISVLQVLAAIFIGALTYRLIDAFFLSPLRSIPGPLLARLTTKRANVDTFSGKVTQTVDKDVARYGDVYVYKPRAVCINHPDDIRAVLGSQEFRKAAFFDIFNDGNTPNIVSLREPELANRRRRQLGPFFNYAYLGRAEPLILQHGYQAIRTKWDALIQANSGRPTEVNYRTDTQLVTFDIMSALAFGRNFNAISRGSSSIMKWAGLIMEMLESPAVLALLSLLPFSLIMRPWKIMYRELAAFSSDAVDMRKQLLAEDSTEKPLDMLQAFIDAEDPESKIKMSPHEVQAESIMMMLAGSETTSSAIMWTFHLLLLYPETLRRAVHEVRSAFSLNHLVTYKDVRSSLPYVEACVYEALRHSPTTAGLTPRISHSTGITLQGYYIPPGTEIYVNLRSPSMHPSLWDDPARFNPDRFLDSDNNKRLLFTFSYGPRNCLGRNLAWVEMLTIVANVLKDYDIALTEDSLFGPHCTDENGLPVLMPAKCFIASFPAKPERDCRMVITRRMAGVKACAREYSPC</sequence>
<comment type="function">
    <text evidence="6 7 8">Cytochrome P450 monooxygenase; part of the gene cluster that mediates the biosynthesis of helvolic acid, an antibacterial nortriterpenoid (PubMed:19216560, PubMed:19415934, PubMed:29158519). Protostadienol synthase helA cyclizes (3S)-oxidosqualene to (17Z)-protosta-17(20),24-dien-3-beta-ol (protostadienol) (PubMed:19216560, PubMed:19415934, PubMed:29158519). The synthesis of protostadienol is followed by several steps of monooxygenation, dehydrogenation, and acyl transfer to yield the final helvolic acid (PubMed:19216560). Following the cyclization to the tetracyclic protostadienol by helA, cytochrome P450 monooxygenases helB1-mediated and helB2-mediated oxidation at C-4 and C-16, acyltransferase helD2-dependent acetylation of 16-OH, oxidation of C-21 by cytochrome P450 monooxygenase helB4, and short chain dehydrogenase helC-dependent oxidative decarboxylation yield the fusidane skeleton (PubMed:29158519). This intermediate is further modified in three additional steps mediated by the cytochrome P450 monooxygenase helB3, the acyltransferase helD1, and the 3-ketosteroid 1-dehydrogenase helE to give helvolic acid (PubMed:19216560, PubMed:19415934, PubMed:29158519). Compared with the late stages in the biosynthesis of helvolic acid, enzymes involved in the early stage modifications act in a relatively strict order (PubMed:29158519). The hydroxylation of C-16 by helB1 and subsequent acetylation by helD2 should occur before the helB3-mediated oxidation of C-21 (PubMed:29158519). C-4 demethylation in fusidane-type antibiotics proceeds in an unusual manner though it is also achieved by oxidative decarboxylation (PubMed:19415934, PubMed:29158519). The methyl group at C-4 beta position is oxidized by helB1 and subsequently removed by the short chain dehydrogenase helC (PubMed:19415934, PubMed:29158519).</text>
</comment>
<comment type="cofactor">
    <cofactor evidence="1">
        <name>heme</name>
        <dbReference type="ChEBI" id="CHEBI:30413"/>
    </cofactor>
</comment>
<comment type="pathway">
    <text evidence="7 8">Mycotoxin biosynthesis.</text>
</comment>
<comment type="subcellular location">
    <subcellularLocation>
        <location evidence="2">Membrane</location>
        <topology evidence="2">Single-pass membrane protein</topology>
    </subcellularLocation>
</comment>
<comment type="induction">
    <text evidence="5">Expression is under the control of the secondary metabolism regulator laeA (PubMed:17432932).</text>
</comment>
<comment type="similarity">
    <text>Belongs to the cytochrome P450 family.</text>
</comment>
<protein>
    <recommendedName>
        <fullName evidence="10">Cytochrome P450 monooxygenase helB1</fullName>
        <ecNumber evidence="7 8">1.-.-.-</ecNumber>
    </recommendedName>
    <alternativeName>
        <fullName evidence="10">Helvolic acid biosynthesis cluster protein B1</fullName>
    </alternativeName>
</protein>
<keyword id="KW-0325">Glycoprotein</keyword>
<keyword id="KW-0349">Heme</keyword>
<keyword id="KW-0408">Iron</keyword>
<keyword id="KW-0472">Membrane</keyword>
<keyword id="KW-0479">Metal-binding</keyword>
<keyword id="KW-0503">Monooxygenase</keyword>
<keyword id="KW-0560">Oxidoreductase</keyword>
<keyword id="KW-1185">Reference proteome</keyword>
<keyword id="KW-0812">Transmembrane</keyword>
<keyword id="KW-1133">Transmembrane helix</keyword>
<gene>
    <name evidence="10" type="primary">helB1</name>
    <name evidence="9" type="synonym">cyp5081A1</name>
    <name type="ORF">AFUA_4G14780</name>
</gene>
<reference key="1">
    <citation type="journal article" date="2005" name="Nature">
        <title>Genomic sequence of the pathogenic and allergenic filamentous fungus Aspergillus fumigatus.</title>
        <authorList>
            <person name="Nierman W.C."/>
            <person name="Pain A."/>
            <person name="Anderson M.J."/>
            <person name="Wortman J.R."/>
            <person name="Kim H.S."/>
            <person name="Arroyo J."/>
            <person name="Berriman M."/>
            <person name="Abe K."/>
            <person name="Archer D.B."/>
            <person name="Bermejo C."/>
            <person name="Bennett J.W."/>
            <person name="Bowyer P."/>
            <person name="Chen D."/>
            <person name="Collins M."/>
            <person name="Coulsen R."/>
            <person name="Davies R."/>
            <person name="Dyer P.S."/>
            <person name="Farman M.L."/>
            <person name="Fedorova N."/>
            <person name="Fedorova N.D."/>
            <person name="Feldblyum T.V."/>
            <person name="Fischer R."/>
            <person name="Fosker N."/>
            <person name="Fraser A."/>
            <person name="Garcia J.L."/>
            <person name="Garcia M.J."/>
            <person name="Goble A."/>
            <person name="Goldman G.H."/>
            <person name="Gomi K."/>
            <person name="Griffith-Jones S."/>
            <person name="Gwilliam R."/>
            <person name="Haas B.J."/>
            <person name="Haas H."/>
            <person name="Harris D.E."/>
            <person name="Horiuchi H."/>
            <person name="Huang J."/>
            <person name="Humphray S."/>
            <person name="Jimenez J."/>
            <person name="Keller N."/>
            <person name="Khouri H."/>
            <person name="Kitamoto K."/>
            <person name="Kobayashi T."/>
            <person name="Konzack S."/>
            <person name="Kulkarni R."/>
            <person name="Kumagai T."/>
            <person name="Lafton A."/>
            <person name="Latge J.-P."/>
            <person name="Li W."/>
            <person name="Lord A."/>
            <person name="Lu C."/>
            <person name="Majoros W.H."/>
            <person name="May G.S."/>
            <person name="Miller B.L."/>
            <person name="Mohamoud Y."/>
            <person name="Molina M."/>
            <person name="Monod M."/>
            <person name="Mouyna I."/>
            <person name="Mulligan S."/>
            <person name="Murphy L.D."/>
            <person name="O'Neil S."/>
            <person name="Paulsen I."/>
            <person name="Penalva M.A."/>
            <person name="Pertea M."/>
            <person name="Price C."/>
            <person name="Pritchard B.L."/>
            <person name="Quail M.A."/>
            <person name="Rabbinowitsch E."/>
            <person name="Rawlins N."/>
            <person name="Rajandream M.A."/>
            <person name="Reichard U."/>
            <person name="Renauld H."/>
            <person name="Robson G.D."/>
            <person name="Rodriguez de Cordoba S."/>
            <person name="Rodriguez-Pena J.M."/>
            <person name="Ronning C.M."/>
            <person name="Rutter S."/>
            <person name="Salzberg S.L."/>
            <person name="Sanchez M."/>
            <person name="Sanchez-Ferrero J.C."/>
            <person name="Saunders D."/>
            <person name="Seeger K."/>
            <person name="Squares R."/>
            <person name="Squares S."/>
            <person name="Takeuchi M."/>
            <person name="Tekaia F."/>
            <person name="Turner G."/>
            <person name="Vazquez de Aldana C.R."/>
            <person name="Weidman J."/>
            <person name="White O."/>
            <person name="Woodward J.R."/>
            <person name="Yu J.-H."/>
            <person name="Fraser C.M."/>
            <person name="Galagan J.E."/>
            <person name="Asai K."/>
            <person name="Machida M."/>
            <person name="Hall N."/>
            <person name="Barrell B.G."/>
            <person name="Denning D.W."/>
        </authorList>
    </citation>
    <scope>NUCLEOTIDE SEQUENCE [LARGE SCALE GENOMIC DNA]</scope>
    <source>
        <strain>ATCC MYA-4609 / CBS 101355 / FGSC A1100 / Af293</strain>
    </source>
</reference>
<reference key="2">
    <citation type="journal article" date="2007" name="PLoS Pathog.">
        <title>Transcriptional regulation of chemical diversity in Aspergillus fumigatus by LaeA.</title>
        <authorList>
            <person name="Perrin R.M."/>
            <person name="Fedorova N.D."/>
            <person name="Bok J.W."/>
            <person name="Cramer R.A."/>
            <person name="Wortman J.R."/>
            <person name="Kim H.S."/>
            <person name="Nierman W.C."/>
            <person name="Keller N.P."/>
        </authorList>
    </citation>
    <scope>INDUCTION</scope>
</reference>
<reference key="3">
    <citation type="journal article" date="2009" name="J. Am. Chem. Soc.">
        <title>Biosynthesis of steroidal antibiotic fusidanes: functional analysis of oxidosqualene cyclase and subsequent tailoring enzymes from Aspergillus fumigatus.</title>
        <authorList>
            <person name="Mitsuguchi H."/>
            <person name="Seshime Y."/>
            <person name="Fujii I."/>
            <person name="Shibuya M."/>
            <person name="Ebizuka Y."/>
            <person name="Kushiro T."/>
        </authorList>
    </citation>
    <scope>FUNCTION</scope>
    <scope>CATALYTIC ACTIVITY</scope>
    <scope>PATHWAY</scope>
</reference>
<reference key="4">
    <citation type="journal article" date="2009" name="Org. Lett.">
        <title>Protostadienol biosynthesis and metabolism in the pathogenic fungus Aspergillus fumigatus.</title>
        <authorList>
            <person name="Lodeiro S."/>
            <person name="Xiong Q."/>
            <person name="Wilson W.K."/>
            <person name="Ivanova Y."/>
            <person name="Smith M.L."/>
            <person name="May G.S."/>
            <person name="Matsuda S.P."/>
        </authorList>
    </citation>
    <scope>FUNCTION</scope>
</reference>
<reference key="5">
    <citation type="journal article" date="2017" name="Nat. Commun.">
        <title>Biosynthesis of helvolic acid and identification of an unusual C-4-demethylation process distinct from sterol biosynthesis.</title>
        <authorList>
            <person name="Lv J.M."/>
            <person name="Hu D."/>
            <person name="Gao H."/>
            <person name="Kushiro T."/>
            <person name="Awakawa T."/>
            <person name="Chen G.D."/>
            <person name="Wang C.X."/>
            <person name="Abe I."/>
            <person name="Yao X.S."/>
        </authorList>
    </citation>
    <scope>FUNCTION</scope>
    <scope>CATALYTIC ACTIVITY</scope>
    <scope>PATHWAY</scope>
</reference>
<organism>
    <name type="scientific">Aspergillus fumigatus (strain ATCC MYA-4609 / CBS 101355 / FGSC A1100 / Af293)</name>
    <name type="common">Neosartorya fumigata</name>
    <dbReference type="NCBI Taxonomy" id="330879"/>
    <lineage>
        <taxon>Eukaryota</taxon>
        <taxon>Fungi</taxon>
        <taxon>Dikarya</taxon>
        <taxon>Ascomycota</taxon>
        <taxon>Pezizomycotina</taxon>
        <taxon>Eurotiomycetes</taxon>
        <taxon>Eurotiomycetidae</taxon>
        <taxon>Eurotiales</taxon>
        <taxon>Aspergillaceae</taxon>
        <taxon>Aspergillus</taxon>
        <taxon>Aspergillus subgen. Fumigati</taxon>
    </lineage>
</organism>
<accession>Q4WR17</accession>
<name>HELB1_ASPFU</name>
<proteinExistence type="evidence at protein level"/>
<dbReference type="EC" id="1.-.-.-" evidence="7 8"/>
<dbReference type="EMBL" id="AAHF01000005">
    <property type="protein sequence ID" value="EAL89317.1"/>
    <property type="molecule type" value="Genomic_DNA"/>
</dbReference>
<dbReference type="RefSeq" id="XP_751355.1">
    <property type="nucleotide sequence ID" value="XM_746262.1"/>
</dbReference>
<dbReference type="SMR" id="Q4WR17"/>
<dbReference type="STRING" id="330879.Q4WR17"/>
<dbReference type="GlyCosmos" id="Q4WR17">
    <property type="glycosylation" value="1 site, No reported glycans"/>
</dbReference>
<dbReference type="EnsemblFungi" id="EAL89317">
    <property type="protein sequence ID" value="EAL89317"/>
    <property type="gene ID" value="AFUA_4G14780"/>
</dbReference>
<dbReference type="GeneID" id="3509336"/>
<dbReference type="KEGG" id="afm:AFUA_4G14780"/>
<dbReference type="VEuPathDB" id="FungiDB:Afu4g14780"/>
<dbReference type="eggNOG" id="KOG0157">
    <property type="taxonomic scope" value="Eukaryota"/>
</dbReference>
<dbReference type="HOGENOM" id="CLU_001570_14_2_1"/>
<dbReference type="InParanoid" id="Q4WR17"/>
<dbReference type="OMA" id="WVEMLTI"/>
<dbReference type="OrthoDB" id="1470350at2759"/>
<dbReference type="Proteomes" id="UP000002530">
    <property type="component" value="Chromosome 4"/>
</dbReference>
<dbReference type="GO" id="GO:0016020">
    <property type="term" value="C:membrane"/>
    <property type="evidence" value="ECO:0007669"/>
    <property type="project" value="UniProtKB-SubCell"/>
</dbReference>
<dbReference type="GO" id="GO:0020037">
    <property type="term" value="F:heme binding"/>
    <property type="evidence" value="ECO:0007669"/>
    <property type="project" value="InterPro"/>
</dbReference>
<dbReference type="GO" id="GO:0005506">
    <property type="term" value="F:iron ion binding"/>
    <property type="evidence" value="ECO:0007669"/>
    <property type="project" value="InterPro"/>
</dbReference>
<dbReference type="GO" id="GO:0004497">
    <property type="term" value="F:monooxygenase activity"/>
    <property type="evidence" value="ECO:0007669"/>
    <property type="project" value="UniProtKB-KW"/>
</dbReference>
<dbReference type="GO" id="GO:0016705">
    <property type="term" value="F:oxidoreductase activity, acting on paired donors, with incorporation or reduction of molecular oxygen"/>
    <property type="evidence" value="ECO:0007669"/>
    <property type="project" value="InterPro"/>
</dbReference>
<dbReference type="GO" id="GO:1900812">
    <property type="term" value="P:helvolic acid biosynthetic process"/>
    <property type="evidence" value="ECO:0000314"/>
    <property type="project" value="GO_Central"/>
</dbReference>
<dbReference type="GO" id="GO:0019748">
    <property type="term" value="P:secondary metabolic process"/>
    <property type="evidence" value="ECO:0000317"/>
    <property type="project" value="AspGD"/>
</dbReference>
<dbReference type="FunFam" id="1.10.630.10:FF:000075">
    <property type="entry name" value="Cytochrome P450 monooxygenase helB1"/>
    <property type="match status" value="1"/>
</dbReference>
<dbReference type="Gene3D" id="1.10.630.10">
    <property type="entry name" value="Cytochrome P450"/>
    <property type="match status" value="1"/>
</dbReference>
<dbReference type="InterPro" id="IPR001128">
    <property type="entry name" value="Cyt_P450"/>
</dbReference>
<dbReference type="InterPro" id="IPR017972">
    <property type="entry name" value="Cyt_P450_CS"/>
</dbReference>
<dbReference type="InterPro" id="IPR002401">
    <property type="entry name" value="Cyt_P450_E_grp-I"/>
</dbReference>
<dbReference type="InterPro" id="IPR036396">
    <property type="entry name" value="Cyt_P450_sf"/>
</dbReference>
<dbReference type="InterPro" id="IPR050121">
    <property type="entry name" value="Cytochrome_P450_monoxygenase"/>
</dbReference>
<dbReference type="PANTHER" id="PTHR24305">
    <property type="entry name" value="CYTOCHROME P450"/>
    <property type="match status" value="1"/>
</dbReference>
<dbReference type="PANTHER" id="PTHR24305:SF235">
    <property type="entry name" value="CYTOCHROME P450 MONOOXYGENASE APDB-RELATED"/>
    <property type="match status" value="1"/>
</dbReference>
<dbReference type="Pfam" id="PF00067">
    <property type="entry name" value="p450"/>
    <property type="match status" value="1"/>
</dbReference>
<dbReference type="PRINTS" id="PR00463">
    <property type="entry name" value="EP450I"/>
</dbReference>
<dbReference type="PRINTS" id="PR00385">
    <property type="entry name" value="P450"/>
</dbReference>
<dbReference type="SUPFAM" id="SSF48264">
    <property type="entry name" value="Cytochrome P450"/>
    <property type="match status" value="1"/>
</dbReference>
<dbReference type="PROSITE" id="PS00086">
    <property type="entry name" value="CYTOCHROME_P450"/>
    <property type="match status" value="1"/>
</dbReference>